<name>PRR7_MOUSE</name>
<accession>Q3V0I2</accession>
<sequence>MVMSQGTYTFLTCFAGFWLIWGLIVLLCCFCSFLRRRLKRRQEERLREQNLRALELEPLELEGSLAGSPPGLAPPPPPHRSRLEAPVHAHSHVHVHPLLHHGPAPPHAHPHPHHHALPHPPPPHLAVPPRPWSYPRQAESDMSKPPCYEEAVLMAEPPPPYSEVLTDTRGLYRKIVTPFLSRRDSAEKQEQPPPSYKPLFLDRGYTSALHLPSAPRPAAPCPALCLQAERSRRVFPSWTDSELSSREPLEHGAWRLPVSIPLFGRTTAV</sequence>
<reference key="1">
    <citation type="journal article" date="2005" name="Science">
        <title>The transcriptional landscape of the mammalian genome.</title>
        <authorList>
            <person name="Carninci P."/>
            <person name="Kasukawa T."/>
            <person name="Katayama S."/>
            <person name="Gough J."/>
            <person name="Frith M.C."/>
            <person name="Maeda N."/>
            <person name="Oyama R."/>
            <person name="Ravasi T."/>
            <person name="Lenhard B."/>
            <person name="Wells C."/>
            <person name="Kodzius R."/>
            <person name="Shimokawa K."/>
            <person name="Bajic V.B."/>
            <person name="Brenner S.E."/>
            <person name="Batalov S."/>
            <person name="Forrest A.R."/>
            <person name="Zavolan M."/>
            <person name="Davis M.J."/>
            <person name="Wilming L.G."/>
            <person name="Aidinis V."/>
            <person name="Allen J.E."/>
            <person name="Ambesi-Impiombato A."/>
            <person name="Apweiler R."/>
            <person name="Aturaliya R.N."/>
            <person name="Bailey T.L."/>
            <person name="Bansal M."/>
            <person name="Baxter L."/>
            <person name="Beisel K.W."/>
            <person name="Bersano T."/>
            <person name="Bono H."/>
            <person name="Chalk A.M."/>
            <person name="Chiu K.P."/>
            <person name="Choudhary V."/>
            <person name="Christoffels A."/>
            <person name="Clutterbuck D.R."/>
            <person name="Crowe M.L."/>
            <person name="Dalla E."/>
            <person name="Dalrymple B.P."/>
            <person name="de Bono B."/>
            <person name="Della Gatta G."/>
            <person name="di Bernardo D."/>
            <person name="Down T."/>
            <person name="Engstrom P."/>
            <person name="Fagiolini M."/>
            <person name="Faulkner G."/>
            <person name="Fletcher C.F."/>
            <person name="Fukushima T."/>
            <person name="Furuno M."/>
            <person name="Futaki S."/>
            <person name="Gariboldi M."/>
            <person name="Georgii-Hemming P."/>
            <person name="Gingeras T.R."/>
            <person name="Gojobori T."/>
            <person name="Green R.E."/>
            <person name="Gustincich S."/>
            <person name="Harbers M."/>
            <person name="Hayashi Y."/>
            <person name="Hensch T.K."/>
            <person name="Hirokawa N."/>
            <person name="Hill D."/>
            <person name="Huminiecki L."/>
            <person name="Iacono M."/>
            <person name="Ikeo K."/>
            <person name="Iwama A."/>
            <person name="Ishikawa T."/>
            <person name="Jakt M."/>
            <person name="Kanapin A."/>
            <person name="Katoh M."/>
            <person name="Kawasawa Y."/>
            <person name="Kelso J."/>
            <person name="Kitamura H."/>
            <person name="Kitano H."/>
            <person name="Kollias G."/>
            <person name="Krishnan S.P."/>
            <person name="Kruger A."/>
            <person name="Kummerfeld S.K."/>
            <person name="Kurochkin I.V."/>
            <person name="Lareau L.F."/>
            <person name="Lazarevic D."/>
            <person name="Lipovich L."/>
            <person name="Liu J."/>
            <person name="Liuni S."/>
            <person name="McWilliam S."/>
            <person name="Madan Babu M."/>
            <person name="Madera M."/>
            <person name="Marchionni L."/>
            <person name="Matsuda H."/>
            <person name="Matsuzawa S."/>
            <person name="Miki H."/>
            <person name="Mignone F."/>
            <person name="Miyake S."/>
            <person name="Morris K."/>
            <person name="Mottagui-Tabar S."/>
            <person name="Mulder N."/>
            <person name="Nakano N."/>
            <person name="Nakauchi H."/>
            <person name="Ng P."/>
            <person name="Nilsson R."/>
            <person name="Nishiguchi S."/>
            <person name="Nishikawa S."/>
            <person name="Nori F."/>
            <person name="Ohara O."/>
            <person name="Okazaki Y."/>
            <person name="Orlando V."/>
            <person name="Pang K.C."/>
            <person name="Pavan W.J."/>
            <person name="Pavesi G."/>
            <person name="Pesole G."/>
            <person name="Petrovsky N."/>
            <person name="Piazza S."/>
            <person name="Reed J."/>
            <person name="Reid J.F."/>
            <person name="Ring B.Z."/>
            <person name="Ringwald M."/>
            <person name="Rost B."/>
            <person name="Ruan Y."/>
            <person name="Salzberg S.L."/>
            <person name="Sandelin A."/>
            <person name="Schneider C."/>
            <person name="Schoenbach C."/>
            <person name="Sekiguchi K."/>
            <person name="Semple C.A."/>
            <person name="Seno S."/>
            <person name="Sessa L."/>
            <person name="Sheng Y."/>
            <person name="Shibata Y."/>
            <person name="Shimada H."/>
            <person name="Shimada K."/>
            <person name="Silva D."/>
            <person name="Sinclair B."/>
            <person name="Sperling S."/>
            <person name="Stupka E."/>
            <person name="Sugiura K."/>
            <person name="Sultana R."/>
            <person name="Takenaka Y."/>
            <person name="Taki K."/>
            <person name="Tammoja K."/>
            <person name="Tan S.L."/>
            <person name="Tang S."/>
            <person name="Taylor M.S."/>
            <person name="Tegner J."/>
            <person name="Teichmann S.A."/>
            <person name="Ueda H.R."/>
            <person name="van Nimwegen E."/>
            <person name="Verardo R."/>
            <person name="Wei C.L."/>
            <person name="Yagi K."/>
            <person name="Yamanishi H."/>
            <person name="Zabarovsky E."/>
            <person name="Zhu S."/>
            <person name="Zimmer A."/>
            <person name="Hide W."/>
            <person name="Bult C."/>
            <person name="Grimmond S.M."/>
            <person name="Teasdale R.D."/>
            <person name="Liu E.T."/>
            <person name="Brusic V."/>
            <person name="Quackenbush J."/>
            <person name="Wahlestedt C."/>
            <person name="Mattick J.S."/>
            <person name="Hume D.A."/>
            <person name="Kai C."/>
            <person name="Sasaki D."/>
            <person name="Tomaru Y."/>
            <person name="Fukuda S."/>
            <person name="Kanamori-Katayama M."/>
            <person name="Suzuki M."/>
            <person name="Aoki J."/>
            <person name="Arakawa T."/>
            <person name="Iida J."/>
            <person name="Imamura K."/>
            <person name="Itoh M."/>
            <person name="Kato T."/>
            <person name="Kawaji H."/>
            <person name="Kawagashira N."/>
            <person name="Kawashima T."/>
            <person name="Kojima M."/>
            <person name="Kondo S."/>
            <person name="Konno H."/>
            <person name="Nakano K."/>
            <person name="Ninomiya N."/>
            <person name="Nishio T."/>
            <person name="Okada M."/>
            <person name="Plessy C."/>
            <person name="Shibata K."/>
            <person name="Shiraki T."/>
            <person name="Suzuki S."/>
            <person name="Tagami M."/>
            <person name="Waki K."/>
            <person name="Watahiki A."/>
            <person name="Okamura-Oho Y."/>
            <person name="Suzuki H."/>
            <person name="Kawai J."/>
            <person name="Hayashizaki Y."/>
        </authorList>
    </citation>
    <scope>NUCLEOTIDE SEQUENCE [LARGE SCALE MRNA]</scope>
    <source>
        <strain>C57BL/6J</strain>
        <tissue>Testis</tissue>
    </source>
</reference>
<reference key="2">
    <citation type="journal article" date="2010" name="Cell">
        <title>A tissue-specific atlas of mouse protein phosphorylation and expression.</title>
        <authorList>
            <person name="Huttlin E.L."/>
            <person name="Jedrychowski M.P."/>
            <person name="Elias J.E."/>
            <person name="Goswami T."/>
            <person name="Rad R."/>
            <person name="Beausoleil S.A."/>
            <person name="Villen J."/>
            <person name="Haas W."/>
            <person name="Sowa M.E."/>
            <person name="Gygi S.P."/>
        </authorList>
    </citation>
    <scope>PHOSPHORYLATION [LARGE SCALE ANALYSIS] AT SER-64</scope>
    <scope>IDENTIFICATION BY MASS SPECTROMETRY [LARGE SCALE ANALYSIS]</scope>
    <source>
        <tissue>Brain</tissue>
    </source>
</reference>
<reference key="3">
    <citation type="journal article" date="2016" name="EMBO J.">
        <title>Synaptonuclear messenger PRR7 inhibits c-Jun ubiquitination and regulates NMDA-mediated excitotoxicity.</title>
        <authorList>
            <person name="Kravchick D.O."/>
            <person name="Karpova A."/>
            <person name="Hrdinka M."/>
            <person name="Lopez-Rojas J."/>
            <person name="Iacobas S."/>
            <person name="Carbonell A.U."/>
            <person name="Iacobas D.A."/>
            <person name="Kreutz M.R."/>
            <person name="Jordan B.A."/>
        </authorList>
    </citation>
    <scope>INTERACTION WITH JUN</scope>
</reference>
<reference key="4">
    <citation type="journal article" date="2016" name="PLoS ONE">
        <title>Normal development and function of T cells in Proline rich 7 (Prr7) deficient mice.</title>
        <authorList>
            <person name="Hrdinka M."/>
            <person name="Sudan K."/>
            <person name="Just S."/>
            <person name="Drobek A."/>
            <person name="Stepanek O."/>
            <person name="Schlueter D."/>
            <person name="Reinhold D."/>
            <person name="Jordan B.A."/>
            <person name="Gintschel P."/>
            <person name="Schraven B."/>
            <person name="Kreutz M.R."/>
        </authorList>
    </citation>
    <scope>FUNCTION</scope>
    <scope>TISSUE SPECIFICITY</scope>
    <scope>DISRUPTION PHENOTYPE</scope>
</reference>
<comment type="function">
    <text evidence="1 2 6">Acts as a synapse-to-nucleus messenger to promote NMDA receptor-mediated excitotoxicity in neurons in a JUN-dependent manner (By similarity). Inhibits ubiquitination-mediated degradation and promotes phosphorylation and transcriptional activity of transcription factor JUN (By similarity). Might play a redundant role in the regulation of T cell receptor signaling (PubMed:27657535). Might promote apoptosis in T cells (By similarity).</text>
</comment>
<comment type="subunit">
    <text evidence="1 2 5">Forms a complex with NMDA receptor zeta subunit GRIN1 and epsilon subunit GRIN2B (By similarity). Interacts with GRIN2B (By similarity). Interacts with GRIN1; the interaction is reduced upon NMDA receptor activity (By similarity). Found in a postsynaptic membrane complex with DLG4 and GRIN1 (By similarity). Interacts with DLG4 (via PDZ3 domain and to lesser degree via PDZ2 domain) (By similarity). Interacts with JUN (PubMed:27458189). Found in a complex with JUN and FBXW7 (By similarity). Interacts with JUN and FBXW7; the interaction inhibits ubiquitination-mediated JUN degradation promoting its phosphorylation and transcriptional activity (By similarity). Interacts with SRC (By similarity).</text>
</comment>
<comment type="subcellular location">
    <subcellularLocation>
        <location evidence="2">Cell membrane</location>
        <topology evidence="7">Single-pass type III membrane protein</topology>
    </subcellularLocation>
    <subcellularLocation>
        <location evidence="1">Postsynaptic cell membrane</location>
        <topology evidence="7">Single-pass type III membrane protein</topology>
    </subcellularLocation>
    <subcellularLocation>
        <location evidence="1">Postsynaptic density membrane</location>
    </subcellularLocation>
    <subcellularLocation>
        <location evidence="2">Cytoplasm</location>
        <location evidence="2">Perinuclear region</location>
    </subcellularLocation>
    <subcellularLocation>
        <location evidence="1">Synapse</location>
    </subcellularLocation>
    <subcellularLocation>
        <location evidence="1">Cell projection</location>
        <location evidence="1">Dendrite</location>
    </subcellularLocation>
    <subcellularLocation>
        <location evidence="1">Nucleus</location>
    </subcellularLocation>
    <text evidence="1">Enriched in postsynaptic plasma membrane and postsynaptic densities (PSD). Accumulates in spines along with synapse maturation and colocalizes with DLG4 in a punctate pattern. Translocates from synapses to nuclei following NMDA receptor activity (By similarity).</text>
</comment>
<comment type="tissue specificity">
    <text evidence="6">Highly expressed in brain, moderately expressed in lymph nodes and T cells and low expression in thymus and spleen. Expressed in single positive progenitor thymocytes, particularly in CD8 single positive thymocytes.</text>
</comment>
<comment type="PTM">
    <text evidence="2">Palmitoylated.</text>
</comment>
<comment type="PTM">
    <text evidence="2">Tyrosine phosphorylated, possibly by SRC.</text>
</comment>
<comment type="disruption phenotype">
    <text evidence="6">No visible phenotype. Mice are viable and fertile. T-cell and B-cell development are normal. T cell receptor signaling and activation induced cell death appear normal. Small reduction of CD4 single positive thymocytes.</text>
</comment>
<organism>
    <name type="scientific">Mus musculus</name>
    <name type="common">Mouse</name>
    <dbReference type="NCBI Taxonomy" id="10090"/>
    <lineage>
        <taxon>Eukaryota</taxon>
        <taxon>Metazoa</taxon>
        <taxon>Chordata</taxon>
        <taxon>Craniata</taxon>
        <taxon>Vertebrata</taxon>
        <taxon>Euteleostomi</taxon>
        <taxon>Mammalia</taxon>
        <taxon>Eutheria</taxon>
        <taxon>Euarchontoglires</taxon>
        <taxon>Glires</taxon>
        <taxon>Rodentia</taxon>
        <taxon>Myomorpha</taxon>
        <taxon>Muroidea</taxon>
        <taxon>Muridae</taxon>
        <taxon>Murinae</taxon>
        <taxon>Mus</taxon>
        <taxon>Mus</taxon>
    </lineage>
</organism>
<keyword id="KW-1064">Adaptive immunity</keyword>
<keyword id="KW-1003">Cell membrane</keyword>
<keyword id="KW-0966">Cell projection</keyword>
<keyword id="KW-0963">Cytoplasm</keyword>
<keyword id="KW-0391">Immunity</keyword>
<keyword id="KW-0449">Lipoprotein</keyword>
<keyword id="KW-0472">Membrane</keyword>
<keyword id="KW-0539">Nucleus</keyword>
<keyword id="KW-0564">Palmitate</keyword>
<keyword id="KW-0597">Phosphoprotein</keyword>
<keyword id="KW-0628">Postsynaptic cell membrane</keyword>
<keyword id="KW-1185">Reference proteome</keyword>
<keyword id="KW-0735">Signal-anchor</keyword>
<keyword id="KW-0770">Synapse</keyword>
<keyword id="KW-0812">Transmembrane</keyword>
<keyword id="KW-1133">Transmembrane helix</keyword>
<feature type="chain" id="PRO_0000328650" description="Proline-rich protein 7">
    <location>
        <begin position="1"/>
        <end position="269"/>
    </location>
</feature>
<feature type="topological domain" description="Extracellular" evidence="3">
    <location>
        <begin position="1"/>
        <end position="9"/>
    </location>
</feature>
<feature type="transmembrane region" description="Helical; Signal-anchor for type III membrane protein" evidence="3">
    <location>
        <begin position="10"/>
        <end position="30"/>
    </location>
</feature>
<feature type="topological domain" description="Cytoplasmic" evidence="3">
    <location>
        <begin position="31"/>
        <end position="269"/>
    </location>
</feature>
<feature type="region of interest" description="Required for interaction with NMDA receptors" evidence="2">
    <location>
        <begin position="1"/>
        <end position="44"/>
    </location>
</feature>
<feature type="region of interest" description="Required for membrane localization" evidence="2">
    <location>
        <begin position="2"/>
        <end position="39"/>
    </location>
</feature>
<feature type="region of interest" description="Disordered" evidence="4">
    <location>
        <begin position="63"/>
        <end position="83"/>
    </location>
</feature>
<feature type="region of interest" description="Disordered" evidence="4">
    <location>
        <begin position="97"/>
        <end position="121"/>
    </location>
</feature>
<feature type="region of interest" description="Required for apoptosis induction" evidence="2">
    <location>
        <begin position="146"/>
        <end position="269"/>
    </location>
</feature>
<feature type="region of interest" description="Required for internalization" evidence="2">
    <location>
        <begin position="146"/>
        <end position="166"/>
    </location>
</feature>
<feature type="short sequence motif" description="PDZ-binding" evidence="3">
    <location>
        <begin position="267"/>
        <end position="269"/>
    </location>
</feature>
<feature type="compositionally biased region" description="Basic residues" evidence="4">
    <location>
        <begin position="108"/>
        <end position="117"/>
    </location>
</feature>
<feature type="modified residue" description="Phosphoserine" evidence="8">
    <location>
        <position position="64"/>
    </location>
</feature>
<protein>
    <recommendedName>
        <fullName>Proline-rich protein 7</fullName>
    </recommendedName>
    <alternativeName>
        <fullName>Synaptic proline-rich membrane protein</fullName>
    </alternativeName>
</protein>
<evidence type="ECO:0000250" key="1">
    <source>
        <dbReference type="UniProtKB" id="P0C6T3"/>
    </source>
</evidence>
<evidence type="ECO:0000250" key="2">
    <source>
        <dbReference type="UniProtKB" id="Q8TB68"/>
    </source>
</evidence>
<evidence type="ECO:0000255" key="3"/>
<evidence type="ECO:0000256" key="4">
    <source>
        <dbReference type="SAM" id="MobiDB-lite"/>
    </source>
</evidence>
<evidence type="ECO:0000269" key="5">
    <source>
    </source>
</evidence>
<evidence type="ECO:0000269" key="6">
    <source>
    </source>
</evidence>
<evidence type="ECO:0000305" key="7"/>
<evidence type="ECO:0007744" key="8">
    <source>
    </source>
</evidence>
<dbReference type="EMBL" id="AK133129">
    <property type="protein sequence ID" value="BAE21522.1"/>
    <property type="molecule type" value="mRNA"/>
</dbReference>
<dbReference type="CCDS" id="CCDS26546.1"/>
<dbReference type="RefSeq" id="NP_001025467.1">
    <property type="nucleotide sequence ID" value="NM_001030296.4"/>
</dbReference>
<dbReference type="RefSeq" id="XP_017171029.1">
    <property type="nucleotide sequence ID" value="XM_017315540.1"/>
</dbReference>
<dbReference type="BioGRID" id="240804">
    <property type="interactions" value="4"/>
</dbReference>
<dbReference type="FunCoup" id="Q3V0I2">
    <property type="interactions" value="192"/>
</dbReference>
<dbReference type="IntAct" id="Q3V0I2">
    <property type="interactions" value="1"/>
</dbReference>
<dbReference type="MINT" id="Q3V0I2"/>
<dbReference type="STRING" id="10090.ENSMUSP00000046776"/>
<dbReference type="iPTMnet" id="Q3V0I2"/>
<dbReference type="PhosphoSitePlus" id="Q3V0I2"/>
<dbReference type="PaxDb" id="10090-ENSMUSP00000046776"/>
<dbReference type="ProteomicsDB" id="291748"/>
<dbReference type="Antibodypedia" id="29296">
    <property type="antibodies" value="136 antibodies from 21 providers"/>
</dbReference>
<dbReference type="Ensembl" id="ENSMUST00000046533.9">
    <property type="protein sequence ID" value="ENSMUSP00000046776.8"/>
    <property type="gene ID" value="ENSMUSG00000034686.9"/>
</dbReference>
<dbReference type="GeneID" id="432763"/>
<dbReference type="KEGG" id="mmu:432763"/>
<dbReference type="UCSC" id="uc007qrb.2">
    <property type="organism name" value="mouse"/>
</dbReference>
<dbReference type="AGR" id="MGI:3487246"/>
<dbReference type="CTD" id="80758"/>
<dbReference type="MGI" id="MGI:3487246">
    <property type="gene designation" value="Prr7"/>
</dbReference>
<dbReference type="VEuPathDB" id="HostDB:ENSMUSG00000034686"/>
<dbReference type="eggNOG" id="ENOG502RA5T">
    <property type="taxonomic scope" value="Eukaryota"/>
</dbReference>
<dbReference type="GeneTree" id="ENSGT00950000183109"/>
<dbReference type="HOGENOM" id="CLU_081607_0_0_1"/>
<dbReference type="InParanoid" id="Q3V0I2"/>
<dbReference type="OMA" id="IVMVCCF"/>
<dbReference type="OrthoDB" id="8897120at2759"/>
<dbReference type="PhylomeDB" id="Q3V0I2"/>
<dbReference type="TreeFam" id="TF332076"/>
<dbReference type="BioGRID-ORCS" id="432763">
    <property type="hits" value="0 hits in 80 CRISPR screens"/>
</dbReference>
<dbReference type="CD-CODE" id="CE726F99">
    <property type="entry name" value="Postsynaptic density"/>
</dbReference>
<dbReference type="PRO" id="PR:Q3V0I2"/>
<dbReference type="Proteomes" id="UP000000589">
    <property type="component" value="Chromosome 13"/>
</dbReference>
<dbReference type="RNAct" id="Q3V0I2">
    <property type="molecule type" value="protein"/>
</dbReference>
<dbReference type="Bgee" id="ENSMUSG00000034686">
    <property type="expression patterns" value="Expressed in striatum and 55 other cell types or tissues"/>
</dbReference>
<dbReference type="ExpressionAtlas" id="Q3V0I2">
    <property type="expression patterns" value="baseline and differential"/>
</dbReference>
<dbReference type="GO" id="GO:0005829">
    <property type="term" value="C:cytosol"/>
    <property type="evidence" value="ECO:0007669"/>
    <property type="project" value="Ensembl"/>
</dbReference>
<dbReference type="GO" id="GO:0030425">
    <property type="term" value="C:dendrite"/>
    <property type="evidence" value="ECO:0007669"/>
    <property type="project" value="UniProtKB-SubCell"/>
</dbReference>
<dbReference type="GO" id="GO:0005654">
    <property type="term" value="C:nucleoplasm"/>
    <property type="evidence" value="ECO:0007669"/>
    <property type="project" value="Ensembl"/>
</dbReference>
<dbReference type="GO" id="GO:0048471">
    <property type="term" value="C:perinuclear region of cytoplasm"/>
    <property type="evidence" value="ECO:0000250"/>
    <property type="project" value="UniProtKB"/>
</dbReference>
<dbReference type="GO" id="GO:0005886">
    <property type="term" value="C:plasma membrane"/>
    <property type="evidence" value="ECO:0000250"/>
    <property type="project" value="UniProtKB"/>
</dbReference>
<dbReference type="GO" id="GO:0098839">
    <property type="term" value="C:postsynaptic density membrane"/>
    <property type="evidence" value="ECO:0007669"/>
    <property type="project" value="UniProtKB-SubCell"/>
</dbReference>
<dbReference type="GO" id="GO:0036041">
    <property type="term" value="F:long-chain fatty acid binding"/>
    <property type="evidence" value="ECO:0000250"/>
    <property type="project" value="UniProtKB"/>
</dbReference>
<dbReference type="GO" id="GO:1990782">
    <property type="term" value="F:protein tyrosine kinase binding"/>
    <property type="evidence" value="ECO:0007669"/>
    <property type="project" value="Ensembl"/>
</dbReference>
<dbReference type="GO" id="GO:0044389">
    <property type="term" value="F:ubiquitin-like protein ligase binding"/>
    <property type="evidence" value="ECO:0007669"/>
    <property type="project" value="Ensembl"/>
</dbReference>
<dbReference type="GO" id="GO:0002250">
    <property type="term" value="P:adaptive immune response"/>
    <property type="evidence" value="ECO:0007669"/>
    <property type="project" value="UniProtKB-KW"/>
</dbReference>
<dbReference type="GO" id="GO:0046632">
    <property type="term" value="P:alpha-beta T cell differentiation"/>
    <property type="evidence" value="ECO:0000315"/>
    <property type="project" value="MGI"/>
</dbReference>
<dbReference type="GO" id="GO:0043065">
    <property type="term" value="P:positive regulation of apoptotic process"/>
    <property type="evidence" value="ECO:0000250"/>
    <property type="project" value="UniProtKB"/>
</dbReference>
<dbReference type="GO" id="GO:0006356">
    <property type="term" value="P:regulation of transcription by RNA polymerase I"/>
    <property type="evidence" value="ECO:0007669"/>
    <property type="project" value="Ensembl"/>
</dbReference>
<dbReference type="GO" id="GO:0033077">
    <property type="term" value="P:T cell differentiation in thymus"/>
    <property type="evidence" value="ECO:0000315"/>
    <property type="project" value="MGI"/>
</dbReference>
<dbReference type="InterPro" id="IPR051994">
    <property type="entry name" value="WW_domain-binding"/>
</dbReference>
<dbReference type="PANTHER" id="PTHR16209:SF3">
    <property type="entry name" value="PROLINE-RICH PROTEIN 7"/>
    <property type="match status" value="1"/>
</dbReference>
<dbReference type="PANTHER" id="PTHR16209">
    <property type="entry name" value="VESICULAR, OVEREXPRESSED IN CANCER, PROSURVIVAL PROTEIN 1"/>
    <property type="match status" value="1"/>
</dbReference>
<proteinExistence type="evidence at protein level"/>
<gene>
    <name type="primary">Prr7</name>
</gene>